<comment type="subunit">
    <text evidence="4">Interacts with CDC48A.</text>
</comment>
<keyword id="KW-1185">Reference proteome</keyword>
<keyword id="KW-0833">Ubl conjugation pathway</keyword>
<feature type="chain" id="PRO_0000432602" description="Plant UBX domain-containing protein 3">
    <location>
        <begin position="1"/>
        <end position="302"/>
    </location>
</feature>
<feature type="domain" description="SEP" evidence="2">
    <location>
        <begin position="113"/>
        <end position="177"/>
    </location>
</feature>
<feature type="domain" description="UBX" evidence="1">
    <location>
        <begin position="224"/>
        <end position="301"/>
    </location>
</feature>
<feature type="region of interest" description="Disordered" evidence="3">
    <location>
        <begin position="1"/>
        <end position="64"/>
    </location>
</feature>
<feature type="region of interest" description="Disordered" evidence="3">
    <location>
        <begin position="79"/>
        <end position="98"/>
    </location>
</feature>
<proteinExistence type="evidence at protein level"/>
<gene>
    <name evidence="7" type="primary">PUX3</name>
    <name evidence="6" type="ordered locus">At4g22150</name>
    <name evidence="8" type="ORF">T10I14.3</name>
</gene>
<dbReference type="EMBL" id="AY572783">
    <property type="protein sequence ID" value="AAS78925.1"/>
    <property type="molecule type" value="mRNA"/>
</dbReference>
<dbReference type="EMBL" id="AL021712">
    <property type="protein sequence ID" value="CAB52871.1"/>
    <property type="molecule type" value="Genomic_DNA"/>
</dbReference>
<dbReference type="EMBL" id="AL161556">
    <property type="protein sequence ID" value="CAB79170.1"/>
    <property type="molecule type" value="Genomic_DNA"/>
</dbReference>
<dbReference type="EMBL" id="CP002687">
    <property type="protein sequence ID" value="AEE84564.2"/>
    <property type="molecule type" value="Genomic_DNA"/>
</dbReference>
<dbReference type="EMBL" id="BT010440">
    <property type="protein sequence ID" value="AAQ62441.1"/>
    <property type="molecule type" value="mRNA"/>
</dbReference>
<dbReference type="EMBL" id="AK176241">
    <property type="protein sequence ID" value="BAD44004.1"/>
    <property type="molecule type" value="mRNA"/>
</dbReference>
<dbReference type="PIR" id="D85253">
    <property type="entry name" value="D85253"/>
</dbReference>
<dbReference type="RefSeq" id="NP_193946.3">
    <property type="nucleotide sequence ID" value="NM_118336.5"/>
</dbReference>
<dbReference type="SMR" id="Q9SUG6"/>
<dbReference type="FunCoup" id="Q9SUG6">
    <property type="interactions" value="4335"/>
</dbReference>
<dbReference type="STRING" id="3702.Q9SUG6"/>
<dbReference type="TCDB" id="3.A.16.1.5">
    <property type="family name" value="the endoplasmic reticular retrotranslocon (er-rt) family"/>
</dbReference>
<dbReference type="iPTMnet" id="Q9SUG6"/>
<dbReference type="PaxDb" id="3702-AT4G22150.1"/>
<dbReference type="ProteomicsDB" id="236547"/>
<dbReference type="EnsemblPlants" id="AT4G22150.1">
    <property type="protein sequence ID" value="AT4G22150.1"/>
    <property type="gene ID" value="AT4G22150"/>
</dbReference>
<dbReference type="GeneID" id="828304"/>
<dbReference type="Gramene" id="AT4G22150.1">
    <property type="protein sequence ID" value="AT4G22150.1"/>
    <property type="gene ID" value="AT4G22150"/>
</dbReference>
<dbReference type="KEGG" id="ath:AT4G22150"/>
<dbReference type="Araport" id="AT4G22150"/>
<dbReference type="TAIR" id="AT4G22150">
    <property type="gene designation" value="PUX3"/>
</dbReference>
<dbReference type="eggNOG" id="KOG2086">
    <property type="taxonomic scope" value="Eukaryota"/>
</dbReference>
<dbReference type="InParanoid" id="Q9SUG6"/>
<dbReference type="OMA" id="THIITFW"/>
<dbReference type="PhylomeDB" id="Q9SUG6"/>
<dbReference type="PRO" id="PR:Q9SUG6"/>
<dbReference type="Proteomes" id="UP000006548">
    <property type="component" value="Chromosome 4"/>
</dbReference>
<dbReference type="ExpressionAtlas" id="Q9SUG6">
    <property type="expression patterns" value="baseline and differential"/>
</dbReference>
<dbReference type="GO" id="GO:0005829">
    <property type="term" value="C:cytosol"/>
    <property type="evidence" value="ECO:0007005"/>
    <property type="project" value="TAIR"/>
</dbReference>
<dbReference type="CDD" id="cd01770">
    <property type="entry name" value="UBX_UBXN2"/>
    <property type="match status" value="1"/>
</dbReference>
<dbReference type="FunFam" id="3.10.20.90:FF:000179">
    <property type="entry name" value="Plant UBX domain-containing protein 4"/>
    <property type="match status" value="1"/>
</dbReference>
<dbReference type="FunFam" id="3.30.420.210:FF:000005">
    <property type="entry name" value="Plant UBX domain-containing protein 4"/>
    <property type="match status" value="1"/>
</dbReference>
<dbReference type="Gene3D" id="3.10.20.90">
    <property type="entry name" value="Phosphatidylinositol 3-kinase Catalytic Subunit, Chain A, domain 1"/>
    <property type="match status" value="1"/>
</dbReference>
<dbReference type="Gene3D" id="3.30.420.210">
    <property type="entry name" value="SEP domain"/>
    <property type="match status" value="1"/>
</dbReference>
<dbReference type="InterPro" id="IPR036241">
    <property type="entry name" value="NSFL1C_SEP_dom_sf"/>
</dbReference>
<dbReference type="InterPro" id="IPR012989">
    <property type="entry name" value="SEP_domain"/>
</dbReference>
<dbReference type="InterPro" id="IPR029071">
    <property type="entry name" value="Ubiquitin-like_domsf"/>
</dbReference>
<dbReference type="InterPro" id="IPR001012">
    <property type="entry name" value="UBX_dom"/>
</dbReference>
<dbReference type="PANTHER" id="PTHR23333:SF20">
    <property type="entry name" value="NSFL1 COFACTOR P47"/>
    <property type="match status" value="1"/>
</dbReference>
<dbReference type="PANTHER" id="PTHR23333">
    <property type="entry name" value="UBX DOMAIN CONTAINING PROTEIN"/>
    <property type="match status" value="1"/>
</dbReference>
<dbReference type="Pfam" id="PF08059">
    <property type="entry name" value="SEP"/>
    <property type="match status" value="1"/>
</dbReference>
<dbReference type="Pfam" id="PF00789">
    <property type="entry name" value="UBX"/>
    <property type="match status" value="1"/>
</dbReference>
<dbReference type="SMART" id="SM00553">
    <property type="entry name" value="SEP"/>
    <property type="match status" value="1"/>
</dbReference>
<dbReference type="SMART" id="SM00166">
    <property type="entry name" value="UBX"/>
    <property type="match status" value="1"/>
</dbReference>
<dbReference type="SUPFAM" id="SSF102848">
    <property type="entry name" value="NSFL1 (p97 ATPase) cofactor p47, SEP domain"/>
    <property type="match status" value="1"/>
</dbReference>
<dbReference type="SUPFAM" id="SSF54236">
    <property type="entry name" value="Ubiquitin-like"/>
    <property type="match status" value="1"/>
</dbReference>
<dbReference type="PROSITE" id="PS51399">
    <property type="entry name" value="SEP"/>
    <property type="match status" value="1"/>
</dbReference>
<dbReference type="PROSITE" id="PS50033">
    <property type="entry name" value="UBX"/>
    <property type="match status" value="1"/>
</dbReference>
<sequence>MSSKDKKLSKPTSGRTGGIRTLSDLNRRSEPDSDSDSDGPQEYFTGGEKSGMLVQDPTKEPKHDDVDEIFNQARQLGAVEGPLEHPSSSRSFTGTGRLLSGESVPTALQQPEPVIHNIIFWSNGFTVDDGPLRKLDDPENASFLDSIRKSECPKELEPVDKRAPVHVNLMRRDEKCPEKEKLKVSFQGVGRTLGGASSSTASSQSNLTDVAAVQSPLQSLVVDETLPSTSIQLRLADGTRMVAKFNNHHTVNDIRGFIEFSRPGNPNNYTLQVMGFPPKPLTDPSQTIEQAGLASSVVIQKF</sequence>
<evidence type="ECO:0000255" key="1">
    <source>
        <dbReference type="PROSITE-ProRule" id="PRU00215"/>
    </source>
</evidence>
<evidence type="ECO:0000255" key="2">
    <source>
        <dbReference type="PROSITE-ProRule" id="PRU00732"/>
    </source>
</evidence>
<evidence type="ECO:0000256" key="3">
    <source>
        <dbReference type="SAM" id="MobiDB-lite"/>
    </source>
</evidence>
<evidence type="ECO:0000269" key="4">
    <source ref="6"/>
</evidence>
<evidence type="ECO:0000303" key="5">
    <source ref="6"/>
</evidence>
<evidence type="ECO:0000312" key="6">
    <source>
        <dbReference type="Araport" id="AT4G22150"/>
    </source>
</evidence>
<evidence type="ECO:0000312" key="7">
    <source>
        <dbReference type="EMBL" id="AAS78925.1"/>
    </source>
</evidence>
<evidence type="ECO:0000312" key="8">
    <source>
        <dbReference type="EMBL" id="CAB52871.1"/>
    </source>
</evidence>
<name>PUX3_ARATH</name>
<organism>
    <name type="scientific">Arabidopsis thaliana</name>
    <name type="common">Mouse-ear cress</name>
    <dbReference type="NCBI Taxonomy" id="3702"/>
    <lineage>
        <taxon>Eukaryota</taxon>
        <taxon>Viridiplantae</taxon>
        <taxon>Streptophyta</taxon>
        <taxon>Embryophyta</taxon>
        <taxon>Tracheophyta</taxon>
        <taxon>Spermatophyta</taxon>
        <taxon>Magnoliopsida</taxon>
        <taxon>eudicotyledons</taxon>
        <taxon>Gunneridae</taxon>
        <taxon>Pentapetalae</taxon>
        <taxon>rosids</taxon>
        <taxon>malvids</taxon>
        <taxon>Brassicales</taxon>
        <taxon>Brassicaceae</taxon>
        <taxon>Camelineae</taxon>
        <taxon>Arabidopsis</taxon>
    </lineage>
</organism>
<protein>
    <recommendedName>
        <fullName evidence="5">Plant UBX domain-containing protein 3</fullName>
        <shortName evidence="5">PUX3</shortName>
    </recommendedName>
    <alternativeName>
        <fullName evidence="7">CDC48-interacting UBX-domain protein 3</fullName>
    </alternativeName>
</protein>
<reference key="1">
    <citation type="journal article" date="2004" name="J. Biol. Chem.">
        <title>Plant UBX domain-containing protein 1, PUX1, regulates the oligomeric structure and activity of arabidopsis CDC48.</title>
        <authorList>
            <person name="Rancour D.M."/>
            <person name="Park S."/>
            <person name="Knight S.D."/>
            <person name="Bednarek S.Y."/>
        </authorList>
    </citation>
    <scope>NUCLEOTIDE SEQUENCE [MRNA]</scope>
    <source>
        <strain>cv. Columbia</strain>
    </source>
</reference>
<reference key="2">
    <citation type="journal article" date="1999" name="Nature">
        <title>Sequence and analysis of chromosome 4 of the plant Arabidopsis thaliana.</title>
        <authorList>
            <person name="Mayer K.F.X."/>
            <person name="Schueller C."/>
            <person name="Wambutt R."/>
            <person name="Murphy G."/>
            <person name="Volckaert G."/>
            <person name="Pohl T."/>
            <person name="Duesterhoeft A."/>
            <person name="Stiekema W."/>
            <person name="Entian K.-D."/>
            <person name="Terryn N."/>
            <person name="Harris B."/>
            <person name="Ansorge W."/>
            <person name="Brandt P."/>
            <person name="Grivell L.A."/>
            <person name="Rieger M."/>
            <person name="Weichselgartner M."/>
            <person name="de Simone V."/>
            <person name="Obermaier B."/>
            <person name="Mache R."/>
            <person name="Mueller M."/>
            <person name="Kreis M."/>
            <person name="Delseny M."/>
            <person name="Puigdomenech P."/>
            <person name="Watson M."/>
            <person name="Schmidtheini T."/>
            <person name="Reichert B."/>
            <person name="Portetelle D."/>
            <person name="Perez-Alonso M."/>
            <person name="Boutry M."/>
            <person name="Bancroft I."/>
            <person name="Vos P."/>
            <person name="Hoheisel J."/>
            <person name="Zimmermann W."/>
            <person name="Wedler H."/>
            <person name="Ridley P."/>
            <person name="Langham S.-A."/>
            <person name="McCullagh B."/>
            <person name="Bilham L."/>
            <person name="Robben J."/>
            <person name="van der Schueren J."/>
            <person name="Grymonprez B."/>
            <person name="Chuang Y.-J."/>
            <person name="Vandenbussche F."/>
            <person name="Braeken M."/>
            <person name="Weltjens I."/>
            <person name="Voet M."/>
            <person name="Bastiaens I."/>
            <person name="Aert R."/>
            <person name="Defoor E."/>
            <person name="Weitzenegger T."/>
            <person name="Bothe G."/>
            <person name="Ramsperger U."/>
            <person name="Hilbert H."/>
            <person name="Braun M."/>
            <person name="Holzer E."/>
            <person name="Brandt A."/>
            <person name="Peters S."/>
            <person name="van Staveren M."/>
            <person name="Dirkse W."/>
            <person name="Mooijman P."/>
            <person name="Klein Lankhorst R."/>
            <person name="Rose M."/>
            <person name="Hauf J."/>
            <person name="Koetter P."/>
            <person name="Berneiser S."/>
            <person name="Hempel S."/>
            <person name="Feldpausch M."/>
            <person name="Lamberth S."/>
            <person name="Van den Daele H."/>
            <person name="De Keyser A."/>
            <person name="Buysshaert C."/>
            <person name="Gielen J."/>
            <person name="Villarroel R."/>
            <person name="De Clercq R."/>
            <person name="van Montagu M."/>
            <person name="Rogers J."/>
            <person name="Cronin A."/>
            <person name="Quail M.A."/>
            <person name="Bray-Allen S."/>
            <person name="Clark L."/>
            <person name="Doggett J."/>
            <person name="Hall S."/>
            <person name="Kay M."/>
            <person name="Lennard N."/>
            <person name="McLay K."/>
            <person name="Mayes R."/>
            <person name="Pettett A."/>
            <person name="Rajandream M.A."/>
            <person name="Lyne M."/>
            <person name="Benes V."/>
            <person name="Rechmann S."/>
            <person name="Borkova D."/>
            <person name="Bloecker H."/>
            <person name="Scharfe M."/>
            <person name="Grimm M."/>
            <person name="Loehnert T.-H."/>
            <person name="Dose S."/>
            <person name="de Haan M."/>
            <person name="Maarse A.C."/>
            <person name="Schaefer M."/>
            <person name="Mueller-Auer S."/>
            <person name="Gabel C."/>
            <person name="Fuchs M."/>
            <person name="Fartmann B."/>
            <person name="Granderath K."/>
            <person name="Dauner D."/>
            <person name="Herzl A."/>
            <person name="Neumann S."/>
            <person name="Argiriou A."/>
            <person name="Vitale D."/>
            <person name="Liguori R."/>
            <person name="Piravandi E."/>
            <person name="Massenet O."/>
            <person name="Quigley F."/>
            <person name="Clabauld G."/>
            <person name="Muendlein A."/>
            <person name="Felber R."/>
            <person name="Schnabl S."/>
            <person name="Hiller R."/>
            <person name="Schmidt W."/>
            <person name="Lecharny A."/>
            <person name="Aubourg S."/>
            <person name="Chefdor F."/>
            <person name="Cooke R."/>
            <person name="Berger C."/>
            <person name="Monfort A."/>
            <person name="Casacuberta E."/>
            <person name="Gibbons T."/>
            <person name="Weber N."/>
            <person name="Vandenbol M."/>
            <person name="Bargues M."/>
            <person name="Terol J."/>
            <person name="Torres A."/>
            <person name="Perez-Perez A."/>
            <person name="Purnelle B."/>
            <person name="Bent E."/>
            <person name="Johnson S."/>
            <person name="Tacon D."/>
            <person name="Jesse T."/>
            <person name="Heijnen L."/>
            <person name="Schwarz S."/>
            <person name="Scholler P."/>
            <person name="Heber S."/>
            <person name="Francs P."/>
            <person name="Bielke C."/>
            <person name="Frishman D."/>
            <person name="Haase D."/>
            <person name="Lemcke K."/>
            <person name="Mewes H.-W."/>
            <person name="Stocker S."/>
            <person name="Zaccaria P."/>
            <person name="Bevan M."/>
            <person name="Wilson R.K."/>
            <person name="de la Bastide M."/>
            <person name="Habermann K."/>
            <person name="Parnell L."/>
            <person name="Dedhia N."/>
            <person name="Gnoj L."/>
            <person name="Schutz K."/>
            <person name="Huang E."/>
            <person name="Spiegel L."/>
            <person name="Sekhon M."/>
            <person name="Murray J."/>
            <person name="Sheet P."/>
            <person name="Cordes M."/>
            <person name="Abu-Threideh J."/>
            <person name="Stoneking T."/>
            <person name="Kalicki J."/>
            <person name="Graves T."/>
            <person name="Harmon G."/>
            <person name="Edwards J."/>
            <person name="Latreille P."/>
            <person name="Courtney L."/>
            <person name="Cloud J."/>
            <person name="Abbott A."/>
            <person name="Scott K."/>
            <person name="Johnson D."/>
            <person name="Minx P."/>
            <person name="Bentley D."/>
            <person name="Fulton B."/>
            <person name="Miller N."/>
            <person name="Greco T."/>
            <person name="Kemp K."/>
            <person name="Kramer J."/>
            <person name="Fulton L."/>
            <person name="Mardis E."/>
            <person name="Dante M."/>
            <person name="Pepin K."/>
            <person name="Hillier L.W."/>
            <person name="Nelson J."/>
            <person name="Spieth J."/>
            <person name="Ryan E."/>
            <person name="Andrews S."/>
            <person name="Geisel C."/>
            <person name="Layman D."/>
            <person name="Du H."/>
            <person name="Ali J."/>
            <person name="Berghoff A."/>
            <person name="Jones K."/>
            <person name="Drone K."/>
            <person name="Cotton M."/>
            <person name="Joshu C."/>
            <person name="Antonoiu B."/>
            <person name="Zidanic M."/>
            <person name="Strong C."/>
            <person name="Sun H."/>
            <person name="Lamar B."/>
            <person name="Yordan C."/>
            <person name="Ma P."/>
            <person name="Zhong J."/>
            <person name="Preston R."/>
            <person name="Vil D."/>
            <person name="Shekher M."/>
            <person name="Matero A."/>
            <person name="Shah R."/>
            <person name="Swaby I.K."/>
            <person name="O'Shaughnessy A."/>
            <person name="Rodriguez M."/>
            <person name="Hoffman J."/>
            <person name="Till S."/>
            <person name="Granat S."/>
            <person name="Shohdy N."/>
            <person name="Hasegawa A."/>
            <person name="Hameed A."/>
            <person name="Lodhi M."/>
            <person name="Johnson A."/>
            <person name="Chen E."/>
            <person name="Marra M.A."/>
            <person name="Martienssen R."/>
            <person name="McCombie W.R."/>
        </authorList>
    </citation>
    <scope>NUCLEOTIDE SEQUENCE [LARGE SCALE GENOMIC DNA]</scope>
    <source>
        <strain>cv. Columbia</strain>
    </source>
</reference>
<reference key="3">
    <citation type="journal article" date="2017" name="Plant J.">
        <title>Araport11: a complete reannotation of the Arabidopsis thaliana reference genome.</title>
        <authorList>
            <person name="Cheng C.Y."/>
            <person name="Krishnakumar V."/>
            <person name="Chan A.P."/>
            <person name="Thibaud-Nissen F."/>
            <person name="Schobel S."/>
            <person name="Town C.D."/>
        </authorList>
    </citation>
    <scope>GENOME REANNOTATION</scope>
    <source>
        <strain>cv. Columbia</strain>
    </source>
</reference>
<reference key="4">
    <citation type="journal article" date="2003" name="Science">
        <title>Empirical analysis of transcriptional activity in the Arabidopsis genome.</title>
        <authorList>
            <person name="Yamada K."/>
            <person name="Lim J."/>
            <person name="Dale J.M."/>
            <person name="Chen H."/>
            <person name="Shinn P."/>
            <person name="Palm C.J."/>
            <person name="Southwick A.M."/>
            <person name="Wu H.C."/>
            <person name="Kim C.J."/>
            <person name="Nguyen M."/>
            <person name="Pham P.K."/>
            <person name="Cheuk R.F."/>
            <person name="Karlin-Newmann G."/>
            <person name="Liu S.X."/>
            <person name="Lam B."/>
            <person name="Sakano H."/>
            <person name="Wu T."/>
            <person name="Yu G."/>
            <person name="Miranda M."/>
            <person name="Quach H.L."/>
            <person name="Tripp M."/>
            <person name="Chang C.H."/>
            <person name="Lee J.M."/>
            <person name="Toriumi M.J."/>
            <person name="Chan M.M."/>
            <person name="Tang C.C."/>
            <person name="Onodera C.S."/>
            <person name="Deng J.M."/>
            <person name="Akiyama K."/>
            <person name="Ansari Y."/>
            <person name="Arakawa T."/>
            <person name="Banh J."/>
            <person name="Banno F."/>
            <person name="Bowser L."/>
            <person name="Brooks S.Y."/>
            <person name="Carninci P."/>
            <person name="Chao Q."/>
            <person name="Choy N."/>
            <person name="Enju A."/>
            <person name="Goldsmith A.D."/>
            <person name="Gurjal M."/>
            <person name="Hansen N.F."/>
            <person name="Hayashizaki Y."/>
            <person name="Johnson-Hopson C."/>
            <person name="Hsuan V.W."/>
            <person name="Iida K."/>
            <person name="Karnes M."/>
            <person name="Khan S."/>
            <person name="Koesema E."/>
            <person name="Ishida J."/>
            <person name="Jiang P.X."/>
            <person name="Jones T."/>
            <person name="Kawai J."/>
            <person name="Kamiya A."/>
            <person name="Meyers C."/>
            <person name="Nakajima M."/>
            <person name="Narusaka M."/>
            <person name="Seki M."/>
            <person name="Sakurai T."/>
            <person name="Satou M."/>
            <person name="Tamse R."/>
            <person name="Vaysberg M."/>
            <person name="Wallender E.K."/>
            <person name="Wong C."/>
            <person name="Yamamura Y."/>
            <person name="Yuan S."/>
            <person name="Shinozaki K."/>
            <person name="Davis R.W."/>
            <person name="Theologis A."/>
            <person name="Ecker J.R."/>
        </authorList>
    </citation>
    <scope>NUCLEOTIDE SEQUENCE [LARGE SCALE MRNA]</scope>
    <source>
        <strain>cv. Columbia</strain>
    </source>
</reference>
<reference key="5">
    <citation type="submission" date="2004-09" db="EMBL/GenBank/DDBJ databases">
        <title>Large-scale analysis of RIKEN Arabidopsis full-length (RAFL) cDNAs.</title>
        <authorList>
            <person name="Totoki Y."/>
            <person name="Seki M."/>
            <person name="Ishida J."/>
            <person name="Nakajima M."/>
            <person name="Enju A."/>
            <person name="Kamiya A."/>
            <person name="Narusaka M."/>
            <person name="Shin-i T."/>
            <person name="Nakagawa M."/>
            <person name="Sakamoto N."/>
            <person name="Oishi K."/>
            <person name="Kohara Y."/>
            <person name="Kobayashi M."/>
            <person name="Toyoda A."/>
            <person name="Sakaki Y."/>
            <person name="Sakurai T."/>
            <person name="Iida K."/>
            <person name="Akiyama K."/>
            <person name="Satou M."/>
            <person name="Toyoda T."/>
            <person name="Konagaya A."/>
            <person name="Carninci P."/>
            <person name="Kawai J."/>
            <person name="Hayashizaki Y."/>
            <person name="Shinozaki K."/>
        </authorList>
    </citation>
    <scope>NUCLEOTIDE SEQUENCE [LARGE SCALE MRNA]</scope>
    <source>
        <strain>cv. Columbia</strain>
    </source>
</reference>
<reference key="6">
    <citation type="book" date="2005" name="Proceedings of the 16th international conference on Arabidopsis research">
        <title>The plant UBX-domain containing (PUX) protein family regulates the function of Arabidopsis CDC48, a conserved essential AAA-ATPase.</title>
        <authorList>
            <person name="Posthuma R."/>
            <person name="Rancour D."/>
            <person name="Park S."/>
            <person name="Bates B."/>
            <person name="Bednarek S."/>
        </authorList>
    </citation>
    <scope>GENE FAMILY</scope>
    <scope>INTERACTION WITH CDC48A</scope>
</reference>
<accession>Q9SUG6</accession>
<accession>F4JL29</accession>